<proteinExistence type="inferred from homology"/>
<comment type="function">
    <text evidence="1">Catalyzes the reversible transfer of the terminal phosphate group between ATP and AMP. Plays an important role in cellular energy homeostasis and in adenine nucleotide metabolism.</text>
</comment>
<comment type="catalytic activity">
    <reaction evidence="1">
        <text>AMP + ATP = 2 ADP</text>
        <dbReference type="Rhea" id="RHEA:12973"/>
        <dbReference type="ChEBI" id="CHEBI:30616"/>
        <dbReference type="ChEBI" id="CHEBI:456215"/>
        <dbReference type="ChEBI" id="CHEBI:456216"/>
        <dbReference type="EC" id="2.7.4.3"/>
    </reaction>
</comment>
<comment type="pathway">
    <text evidence="1">Purine metabolism; AMP biosynthesis via salvage pathway; AMP from ADP: step 1/1.</text>
</comment>
<comment type="subunit">
    <text evidence="1">Monomer.</text>
</comment>
<comment type="subcellular location">
    <subcellularLocation>
        <location evidence="1">Cytoplasm</location>
    </subcellularLocation>
</comment>
<comment type="domain">
    <text evidence="1">Consists of three domains, a large central CORE domain and two small peripheral domains, NMPbind and LID, which undergo movements during catalysis. The LID domain closes over the site of phosphoryl transfer upon ATP binding. Assembling and dissambling the active center during each catalytic cycle provides an effective means to prevent ATP hydrolysis. Some bacteria have evolved a zinc-coordinating structure that stabilizes the LID domain.</text>
</comment>
<comment type="similarity">
    <text evidence="1">Belongs to the adenylate kinase family.</text>
</comment>
<organism>
    <name type="scientific">Clostridium botulinum (strain 657 / Type Ba4)</name>
    <dbReference type="NCBI Taxonomy" id="515621"/>
    <lineage>
        <taxon>Bacteria</taxon>
        <taxon>Bacillati</taxon>
        <taxon>Bacillota</taxon>
        <taxon>Clostridia</taxon>
        <taxon>Eubacteriales</taxon>
        <taxon>Clostridiaceae</taxon>
        <taxon>Clostridium</taxon>
    </lineage>
</organism>
<dbReference type="EC" id="2.7.4.3" evidence="1"/>
<dbReference type="EMBL" id="CP001083">
    <property type="protein sequence ID" value="ACQ54898.1"/>
    <property type="molecule type" value="Genomic_DNA"/>
</dbReference>
<dbReference type="RefSeq" id="WP_003360207.1">
    <property type="nucleotide sequence ID" value="NC_012658.1"/>
</dbReference>
<dbReference type="SMR" id="C3KVN0"/>
<dbReference type="KEGG" id="cbi:CLJ_B3768"/>
<dbReference type="HOGENOM" id="CLU_032354_1_2_9"/>
<dbReference type="UniPathway" id="UPA00588">
    <property type="reaction ID" value="UER00649"/>
</dbReference>
<dbReference type="Proteomes" id="UP000002333">
    <property type="component" value="Chromosome"/>
</dbReference>
<dbReference type="GO" id="GO:0005737">
    <property type="term" value="C:cytoplasm"/>
    <property type="evidence" value="ECO:0007669"/>
    <property type="project" value="UniProtKB-SubCell"/>
</dbReference>
<dbReference type="GO" id="GO:0004017">
    <property type="term" value="F:adenylate kinase activity"/>
    <property type="evidence" value="ECO:0007669"/>
    <property type="project" value="UniProtKB-UniRule"/>
</dbReference>
<dbReference type="GO" id="GO:0005524">
    <property type="term" value="F:ATP binding"/>
    <property type="evidence" value="ECO:0007669"/>
    <property type="project" value="UniProtKB-UniRule"/>
</dbReference>
<dbReference type="GO" id="GO:0008270">
    <property type="term" value="F:zinc ion binding"/>
    <property type="evidence" value="ECO:0007669"/>
    <property type="project" value="UniProtKB-UniRule"/>
</dbReference>
<dbReference type="GO" id="GO:0044209">
    <property type="term" value="P:AMP salvage"/>
    <property type="evidence" value="ECO:0007669"/>
    <property type="project" value="UniProtKB-UniRule"/>
</dbReference>
<dbReference type="CDD" id="cd01428">
    <property type="entry name" value="ADK"/>
    <property type="match status" value="1"/>
</dbReference>
<dbReference type="FunFam" id="3.40.50.300:FF:000106">
    <property type="entry name" value="Adenylate kinase mitochondrial"/>
    <property type="match status" value="1"/>
</dbReference>
<dbReference type="Gene3D" id="3.40.50.300">
    <property type="entry name" value="P-loop containing nucleotide triphosphate hydrolases"/>
    <property type="match status" value="1"/>
</dbReference>
<dbReference type="HAMAP" id="MF_00235">
    <property type="entry name" value="Adenylate_kinase_Adk"/>
    <property type="match status" value="1"/>
</dbReference>
<dbReference type="InterPro" id="IPR006259">
    <property type="entry name" value="Adenyl_kin_sub"/>
</dbReference>
<dbReference type="InterPro" id="IPR000850">
    <property type="entry name" value="Adenylat/UMP-CMP_kin"/>
</dbReference>
<dbReference type="InterPro" id="IPR033690">
    <property type="entry name" value="Adenylat_kinase_CS"/>
</dbReference>
<dbReference type="InterPro" id="IPR007862">
    <property type="entry name" value="Adenylate_kinase_lid-dom"/>
</dbReference>
<dbReference type="InterPro" id="IPR027417">
    <property type="entry name" value="P-loop_NTPase"/>
</dbReference>
<dbReference type="NCBIfam" id="TIGR01351">
    <property type="entry name" value="adk"/>
    <property type="match status" value="1"/>
</dbReference>
<dbReference type="NCBIfam" id="NF001379">
    <property type="entry name" value="PRK00279.1-1"/>
    <property type="match status" value="1"/>
</dbReference>
<dbReference type="NCBIfam" id="NF001380">
    <property type="entry name" value="PRK00279.1-2"/>
    <property type="match status" value="1"/>
</dbReference>
<dbReference type="NCBIfam" id="NF001381">
    <property type="entry name" value="PRK00279.1-3"/>
    <property type="match status" value="1"/>
</dbReference>
<dbReference type="NCBIfam" id="NF011100">
    <property type="entry name" value="PRK14527.1"/>
    <property type="match status" value="1"/>
</dbReference>
<dbReference type="PANTHER" id="PTHR23359">
    <property type="entry name" value="NUCLEOTIDE KINASE"/>
    <property type="match status" value="1"/>
</dbReference>
<dbReference type="Pfam" id="PF00406">
    <property type="entry name" value="ADK"/>
    <property type="match status" value="1"/>
</dbReference>
<dbReference type="Pfam" id="PF05191">
    <property type="entry name" value="ADK_lid"/>
    <property type="match status" value="1"/>
</dbReference>
<dbReference type="PRINTS" id="PR00094">
    <property type="entry name" value="ADENYLTKNASE"/>
</dbReference>
<dbReference type="SUPFAM" id="SSF52540">
    <property type="entry name" value="P-loop containing nucleoside triphosphate hydrolases"/>
    <property type="match status" value="1"/>
</dbReference>
<dbReference type="PROSITE" id="PS00113">
    <property type="entry name" value="ADENYLATE_KINASE"/>
    <property type="match status" value="1"/>
</dbReference>
<keyword id="KW-0067">ATP-binding</keyword>
<keyword id="KW-0963">Cytoplasm</keyword>
<keyword id="KW-0418">Kinase</keyword>
<keyword id="KW-0479">Metal-binding</keyword>
<keyword id="KW-0545">Nucleotide biosynthesis</keyword>
<keyword id="KW-0547">Nucleotide-binding</keyword>
<keyword id="KW-0808">Transferase</keyword>
<keyword id="KW-0862">Zinc</keyword>
<reference key="1">
    <citation type="submission" date="2008-05" db="EMBL/GenBank/DDBJ databases">
        <title>Genome sequence of Clostridium botulinum Ba4 strain 657.</title>
        <authorList>
            <person name="Shrivastava S."/>
            <person name="Brown J.L."/>
            <person name="Bruce D."/>
            <person name="Detter C."/>
            <person name="Munk C."/>
            <person name="Smith L.A."/>
            <person name="Smith T.J."/>
            <person name="Sutton G."/>
            <person name="Brettin T.S."/>
        </authorList>
    </citation>
    <scope>NUCLEOTIDE SEQUENCE [LARGE SCALE GENOMIC DNA]</scope>
    <source>
        <strain>657 / Type Ba4</strain>
    </source>
</reference>
<gene>
    <name evidence="1" type="primary">adk</name>
    <name type="ordered locus">CLJ_B3768</name>
</gene>
<feature type="chain" id="PRO_1000204402" description="Adenylate kinase">
    <location>
        <begin position="1"/>
        <end position="216"/>
    </location>
</feature>
<feature type="region of interest" description="NMP" evidence="1">
    <location>
        <begin position="30"/>
        <end position="59"/>
    </location>
</feature>
<feature type="region of interest" description="LID" evidence="1">
    <location>
        <begin position="126"/>
        <end position="163"/>
    </location>
</feature>
<feature type="binding site" evidence="1">
    <location>
        <begin position="10"/>
        <end position="15"/>
    </location>
    <ligand>
        <name>ATP</name>
        <dbReference type="ChEBI" id="CHEBI:30616"/>
    </ligand>
</feature>
<feature type="binding site" evidence="1">
    <location>
        <position position="31"/>
    </location>
    <ligand>
        <name>AMP</name>
        <dbReference type="ChEBI" id="CHEBI:456215"/>
    </ligand>
</feature>
<feature type="binding site" evidence="1">
    <location>
        <position position="36"/>
    </location>
    <ligand>
        <name>AMP</name>
        <dbReference type="ChEBI" id="CHEBI:456215"/>
    </ligand>
</feature>
<feature type="binding site" evidence="1">
    <location>
        <begin position="57"/>
        <end position="59"/>
    </location>
    <ligand>
        <name>AMP</name>
        <dbReference type="ChEBI" id="CHEBI:456215"/>
    </ligand>
</feature>
<feature type="binding site" evidence="1">
    <location>
        <begin position="85"/>
        <end position="88"/>
    </location>
    <ligand>
        <name>AMP</name>
        <dbReference type="ChEBI" id="CHEBI:456215"/>
    </ligand>
</feature>
<feature type="binding site" evidence="1">
    <location>
        <position position="92"/>
    </location>
    <ligand>
        <name>AMP</name>
        <dbReference type="ChEBI" id="CHEBI:456215"/>
    </ligand>
</feature>
<feature type="binding site" evidence="1">
    <location>
        <position position="127"/>
    </location>
    <ligand>
        <name>ATP</name>
        <dbReference type="ChEBI" id="CHEBI:30616"/>
    </ligand>
</feature>
<feature type="binding site" evidence="1">
    <location>
        <position position="130"/>
    </location>
    <ligand>
        <name>Zn(2+)</name>
        <dbReference type="ChEBI" id="CHEBI:29105"/>
        <note>structural</note>
    </ligand>
</feature>
<feature type="binding site" evidence="1">
    <location>
        <position position="133"/>
    </location>
    <ligand>
        <name>Zn(2+)</name>
        <dbReference type="ChEBI" id="CHEBI:29105"/>
        <note>structural</note>
    </ligand>
</feature>
<feature type="binding site" evidence="1">
    <location>
        <begin position="136"/>
        <end position="137"/>
    </location>
    <ligand>
        <name>ATP</name>
        <dbReference type="ChEBI" id="CHEBI:30616"/>
    </ligand>
</feature>
<feature type="binding site" evidence="1">
    <location>
        <position position="150"/>
    </location>
    <ligand>
        <name>Zn(2+)</name>
        <dbReference type="ChEBI" id="CHEBI:29105"/>
        <note>structural</note>
    </ligand>
</feature>
<feature type="binding site" evidence="1">
    <location>
        <position position="153"/>
    </location>
    <ligand>
        <name>Zn(2+)</name>
        <dbReference type="ChEBI" id="CHEBI:29105"/>
        <note>structural</note>
    </ligand>
</feature>
<feature type="binding site" evidence="1">
    <location>
        <position position="160"/>
    </location>
    <ligand>
        <name>AMP</name>
        <dbReference type="ChEBI" id="CHEBI:456215"/>
    </ligand>
</feature>
<feature type="binding site" evidence="1">
    <location>
        <position position="171"/>
    </location>
    <ligand>
        <name>AMP</name>
        <dbReference type="ChEBI" id="CHEBI:456215"/>
    </ligand>
</feature>
<feature type="binding site" evidence="1">
    <location>
        <position position="199"/>
    </location>
    <ligand>
        <name>ATP</name>
        <dbReference type="ChEBI" id="CHEBI:30616"/>
    </ligand>
</feature>
<name>KAD_CLOB6</name>
<accession>C3KVN0</accession>
<protein>
    <recommendedName>
        <fullName evidence="1">Adenylate kinase</fullName>
        <shortName evidence="1">AK</shortName>
        <ecNumber evidence="1">2.7.4.3</ecNumber>
    </recommendedName>
    <alternativeName>
        <fullName evidence="1">ATP-AMP transphosphorylase</fullName>
    </alternativeName>
    <alternativeName>
        <fullName evidence="1">ATP:AMP phosphotransferase</fullName>
    </alternativeName>
    <alternativeName>
        <fullName evidence="1">Adenylate monophosphate kinase</fullName>
    </alternativeName>
</protein>
<sequence length="216" mass="24120">MRVILLGPPGAGKGTQAKLISEKFSIPHISTGDIFRANIKEKTPLGIEAKRYIDNGQLVPDEVTIGIVKDRLTKDDCDNGFLLDGFPRTVAQAEALDEFLKGINKELDVALLIKVPEEFILERMTGRRVCTSCGASYHIRFNPPKIEGKCDICDNELIQRKDDTEATVKERLEVYSKQTYPLINYYKDNGIISEVNGTESIDEVFGNISNILGRDK</sequence>
<evidence type="ECO:0000255" key="1">
    <source>
        <dbReference type="HAMAP-Rule" id="MF_00235"/>
    </source>
</evidence>